<dbReference type="EMBL" id="BC124981">
    <property type="protein sequence ID" value="AAI24982.1"/>
    <property type="molecule type" value="mRNA"/>
</dbReference>
<dbReference type="RefSeq" id="NP_001121316.1">
    <property type="nucleotide sequence ID" value="NM_001127844.1"/>
</dbReference>
<dbReference type="SMR" id="Q08AW5"/>
<dbReference type="DNASU" id="100158400"/>
<dbReference type="GeneID" id="100158400"/>
<dbReference type="KEGG" id="xla:100158400"/>
<dbReference type="AGR" id="Xenbase:XB-GENE-5848830"/>
<dbReference type="CTD" id="100158400"/>
<dbReference type="Xenbase" id="XB-GENE-5848830">
    <property type="gene designation" value="c6h7orf25.L"/>
</dbReference>
<dbReference type="OMA" id="HFCMFQR"/>
<dbReference type="OrthoDB" id="441890at2759"/>
<dbReference type="Proteomes" id="UP000186698">
    <property type="component" value="Chromosome 6L"/>
</dbReference>
<dbReference type="Bgee" id="100158400">
    <property type="expression patterns" value="Expressed in ovary and 19 other cell types or tissues"/>
</dbReference>
<dbReference type="InterPro" id="IPR010733">
    <property type="entry name" value="DUF1308"/>
</dbReference>
<dbReference type="InterPro" id="IPR041076">
    <property type="entry name" value="DUF5614"/>
</dbReference>
<dbReference type="PANTHER" id="PTHR13379">
    <property type="entry name" value="UNCHARACTERIZED DUF1308"/>
    <property type="match status" value="1"/>
</dbReference>
<dbReference type="PANTHER" id="PTHR13379:SF0">
    <property type="entry name" value="UPF0415 PROTEIN C7ORF25"/>
    <property type="match status" value="1"/>
</dbReference>
<dbReference type="Pfam" id="PF07000">
    <property type="entry name" value="DUF1308"/>
    <property type="match status" value="1"/>
</dbReference>
<dbReference type="Pfam" id="PF18474">
    <property type="entry name" value="DUF5614"/>
    <property type="match status" value="1"/>
</dbReference>
<reference key="1">
    <citation type="submission" date="2006-10" db="EMBL/GenBank/DDBJ databases">
        <authorList>
            <consortium name="NIH - Xenopus Gene Collection (XGC) project"/>
        </authorList>
    </citation>
    <scope>NUCLEOTIDE SEQUENCE [LARGE SCALE MRNA]</scope>
    <source>
        <tissue>Ovary</tissue>
    </source>
</reference>
<sequence length="424" mass="46203">MSVDSMLCDRIDIAKQLIKRSEALSRSRVGGVEGGAKLCSKLKAELKFLQKVEAGKVAIKESHLRSTNLTHLQAVIESAESLEEVVSVLHVFSYNDQFGEKQSLVVDVVANGGHTWVKAIGRKAEALHNIWLGRGQYGDKSVIEQAEDYLLASSQQLVQYSSPHIIFAFYNSVSKPMAEKLKEIGISVRGDIVAVNTSQENLPEENYLSGSESDCDGDDTAVLHVSKVDTENIVASIAFPTEIKVEACKRVNLDITTLITYVSALSHGGCHWLFKEKVLTEQAAQERQEKVLPLLKSFMEAKELFACESAIKDFQSILETLGGPAEKERAALLVKSITVVPDQPSERASKLACSSKINSRSISIFGTGETLKAITMTANSGFVRAAANQGVKFSVFIHQPRALTESKESSATPLPNNYASSNLL</sequence>
<name>CG025_XENLA</name>
<comment type="similarity">
    <text evidence="1">Belongs to the UPF0415 family.</text>
</comment>
<feature type="chain" id="PRO_0000279533" description="UPF0415 protein C7orf25 homolog">
    <location>
        <begin position="1"/>
        <end position="424"/>
    </location>
</feature>
<accession>Q08AW5</accession>
<protein>
    <recommendedName>
        <fullName>UPF0415 protein C7orf25 homolog</fullName>
    </recommendedName>
</protein>
<proteinExistence type="evidence at transcript level"/>
<organism>
    <name type="scientific">Xenopus laevis</name>
    <name type="common">African clawed frog</name>
    <dbReference type="NCBI Taxonomy" id="8355"/>
    <lineage>
        <taxon>Eukaryota</taxon>
        <taxon>Metazoa</taxon>
        <taxon>Chordata</taxon>
        <taxon>Craniata</taxon>
        <taxon>Vertebrata</taxon>
        <taxon>Euteleostomi</taxon>
        <taxon>Amphibia</taxon>
        <taxon>Batrachia</taxon>
        <taxon>Anura</taxon>
        <taxon>Pipoidea</taxon>
        <taxon>Pipidae</taxon>
        <taxon>Xenopodinae</taxon>
        <taxon>Xenopus</taxon>
        <taxon>Xenopus</taxon>
    </lineage>
</organism>
<keyword id="KW-1185">Reference proteome</keyword>
<evidence type="ECO:0000305" key="1"/>